<reference key="1">
    <citation type="journal article" date="2000" name="Nucleic Acids Res.">
        <title>Genome sequences of Chlamydia trachomatis MoPn and Chlamydia pneumoniae AR39.</title>
        <authorList>
            <person name="Read T.D."/>
            <person name="Brunham R.C."/>
            <person name="Shen C."/>
            <person name="Gill S.R."/>
            <person name="Heidelberg J.F."/>
            <person name="White O."/>
            <person name="Hickey E.K."/>
            <person name="Peterson J.D."/>
            <person name="Utterback T.R."/>
            <person name="Berry K.J."/>
            <person name="Bass S."/>
            <person name="Linher K.D."/>
            <person name="Weidman J.F."/>
            <person name="Khouri H.M."/>
            <person name="Craven B."/>
            <person name="Bowman C."/>
            <person name="Dodson R.J."/>
            <person name="Gwinn M.L."/>
            <person name="Nelson W.C."/>
            <person name="DeBoy R.T."/>
            <person name="Kolonay J.F."/>
            <person name="McClarty G."/>
            <person name="Salzberg S.L."/>
            <person name="Eisen J.A."/>
            <person name="Fraser C.M."/>
        </authorList>
    </citation>
    <scope>NUCLEOTIDE SEQUENCE [LARGE SCALE GENOMIC DNA]</scope>
    <source>
        <strain>MoPn / Nigg</strain>
    </source>
</reference>
<gene>
    <name evidence="1" type="primary">leuS</name>
    <name type="ordered locus">TC_0481</name>
</gene>
<keyword id="KW-0030">Aminoacyl-tRNA synthetase</keyword>
<keyword id="KW-0067">ATP-binding</keyword>
<keyword id="KW-0963">Cytoplasm</keyword>
<keyword id="KW-0436">Ligase</keyword>
<keyword id="KW-0547">Nucleotide-binding</keyword>
<keyword id="KW-0648">Protein biosynthesis</keyword>
<feature type="chain" id="PRO_0000151997" description="Leucine--tRNA ligase">
    <location>
        <begin position="1"/>
        <end position="819"/>
    </location>
</feature>
<feature type="short sequence motif" description="'HIGH' region">
    <location>
        <begin position="40"/>
        <end position="51"/>
    </location>
</feature>
<feature type="short sequence motif" description="'KMSKS' region">
    <location>
        <begin position="600"/>
        <end position="604"/>
    </location>
</feature>
<feature type="binding site" evidence="1">
    <location>
        <position position="603"/>
    </location>
    <ligand>
        <name>ATP</name>
        <dbReference type="ChEBI" id="CHEBI:30616"/>
    </ligand>
</feature>
<comment type="catalytic activity">
    <reaction evidence="1">
        <text>tRNA(Leu) + L-leucine + ATP = L-leucyl-tRNA(Leu) + AMP + diphosphate</text>
        <dbReference type="Rhea" id="RHEA:11688"/>
        <dbReference type="Rhea" id="RHEA-COMP:9613"/>
        <dbReference type="Rhea" id="RHEA-COMP:9622"/>
        <dbReference type="ChEBI" id="CHEBI:30616"/>
        <dbReference type="ChEBI" id="CHEBI:33019"/>
        <dbReference type="ChEBI" id="CHEBI:57427"/>
        <dbReference type="ChEBI" id="CHEBI:78442"/>
        <dbReference type="ChEBI" id="CHEBI:78494"/>
        <dbReference type="ChEBI" id="CHEBI:456215"/>
        <dbReference type="EC" id="6.1.1.4"/>
    </reaction>
</comment>
<comment type="subcellular location">
    <subcellularLocation>
        <location evidence="1">Cytoplasm</location>
    </subcellularLocation>
</comment>
<comment type="similarity">
    <text evidence="1">Belongs to the class-I aminoacyl-tRNA synthetase family.</text>
</comment>
<sequence length="819" mass="93015">MRYDPSLIEEKWQKFWKEEQTFRAEEDETKTKYYVLDMFPYPSGAGLHVGHLIGYTATDIVARYKRAKGFSVLHPMGWDSFGLPAEQYAIRTGTHPRETTEKNIANFKQQLTSMGFSYDESREFATSDPEYYKWTQKLFLILYEKGLAYMADMAVNYCPELGTVLSNEEVENGFSVEGGYPVERRMLRQWVLRITAFADQLLGGLDELDWPESVKQLQRNWIGKSVGASVHFETEHGVLEVFTTRPDTLIGVSFLVLAPEHPLVDLLTSDEQKTIVAQYVKETQSKSERDRISEMKTKSGVFTGAYAKHPVTQNPIPIWIADYVLMGYGSGAVMGVPAHDDRDLLFAQQFDLPIISVVSEDGVCINSCHEDFSLDGLSGEEAKQYVINFLEKNNLGSAKVAYKLRDWLFSRQRYWGEPIPVIHFEDGSCRPLKDDELPLLPPEIQDYRPEGVGQGPLAKVKEWVNVFDSETQKEGKRETHTMPQWAGSCWYYLRFCDAHNSCAPWAEEKEQYWMPVDLYIGGAEHAVLHLLYARFWHQVFYEAGIVSTPEPFKKLVNQGLVLSTSYRIPGKGYIAPEMAKEENGQWISPSGELLDVRQEKMSKSKLNGVDPKVLIDEFGADAVRMYAMFSGPLDKNKLWSNQGVAGCRRFLNRFYEMATSSRVKDEDIFEGMSLAHKLVQRVTDDIEKLSLNTITSSFMEFINEFVKLPVYPKNAVEMAVRALAPIAPHISEELWVLLGNASGIEKAGWPKALPEYLEGKIVTIVVQVNGKLRARLDISKDAIEEEVVALAKEAVSKYLEGGVVRKTIFVLNRLVNFVI</sequence>
<dbReference type="EC" id="6.1.1.4" evidence="1"/>
<dbReference type="EMBL" id="AE002160">
    <property type="protein sequence ID" value="AAF39327.1"/>
    <property type="molecule type" value="Genomic_DNA"/>
</dbReference>
<dbReference type="PIR" id="G81698">
    <property type="entry name" value="G81698"/>
</dbReference>
<dbReference type="RefSeq" id="WP_010230558.1">
    <property type="nucleotide sequence ID" value="NZ_CP063055.1"/>
</dbReference>
<dbReference type="SMR" id="Q9PKI4"/>
<dbReference type="GeneID" id="1245839"/>
<dbReference type="KEGG" id="cmu:TC_0481"/>
<dbReference type="eggNOG" id="COG0495">
    <property type="taxonomic scope" value="Bacteria"/>
</dbReference>
<dbReference type="HOGENOM" id="CLU_004427_0_0_0"/>
<dbReference type="OrthoDB" id="9810365at2"/>
<dbReference type="Proteomes" id="UP000000800">
    <property type="component" value="Chromosome"/>
</dbReference>
<dbReference type="GO" id="GO:0005829">
    <property type="term" value="C:cytosol"/>
    <property type="evidence" value="ECO:0007669"/>
    <property type="project" value="TreeGrafter"/>
</dbReference>
<dbReference type="GO" id="GO:0002161">
    <property type="term" value="F:aminoacyl-tRNA deacylase activity"/>
    <property type="evidence" value="ECO:0007669"/>
    <property type="project" value="InterPro"/>
</dbReference>
<dbReference type="GO" id="GO:0005524">
    <property type="term" value="F:ATP binding"/>
    <property type="evidence" value="ECO:0007669"/>
    <property type="project" value="UniProtKB-UniRule"/>
</dbReference>
<dbReference type="GO" id="GO:0004823">
    <property type="term" value="F:leucine-tRNA ligase activity"/>
    <property type="evidence" value="ECO:0007669"/>
    <property type="project" value="UniProtKB-UniRule"/>
</dbReference>
<dbReference type="GO" id="GO:0006429">
    <property type="term" value="P:leucyl-tRNA aminoacylation"/>
    <property type="evidence" value="ECO:0007669"/>
    <property type="project" value="UniProtKB-UniRule"/>
</dbReference>
<dbReference type="CDD" id="cd07958">
    <property type="entry name" value="Anticodon_Ia_Leu_BEm"/>
    <property type="match status" value="1"/>
</dbReference>
<dbReference type="CDD" id="cd00812">
    <property type="entry name" value="LeuRS_core"/>
    <property type="match status" value="1"/>
</dbReference>
<dbReference type="FunFam" id="1.10.730.10:FF:000002">
    <property type="entry name" value="Leucine--tRNA ligase"/>
    <property type="match status" value="1"/>
</dbReference>
<dbReference type="FunFam" id="3.40.50.620:FF:000056">
    <property type="entry name" value="Leucine--tRNA ligase"/>
    <property type="match status" value="1"/>
</dbReference>
<dbReference type="FunFam" id="3.40.50.620:FF:000077">
    <property type="entry name" value="Leucine--tRNA ligase"/>
    <property type="match status" value="1"/>
</dbReference>
<dbReference type="Gene3D" id="3.40.50.620">
    <property type="entry name" value="HUPs"/>
    <property type="match status" value="2"/>
</dbReference>
<dbReference type="Gene3D" id="1.10.730.10">
    <property type="entry name" value="Isoleucyl-tRNA Synthetase, Domain 1"/>
    <property type="match status" value="1"/>
</dbReference>
<dbReference type="Gene3D" id="3.90.740.10">
    <property type="entry name" value="Valyl/Leucyl/Isoleucyl-tRNA synthetase, editing domain"/>
    <property type="match status" value="1"/>
</dbReference>
<dbReference type="HAMAP" id="MF_00049_B">
    <property type="entry name" value="Leu_tRNA_synth_B"/>
    <property type="match status" value="1"/>
</dbReference>
<dbReference type="InterPro" id="IPR001412">
    <property type="entry name" value="aa-tRNA-synth_I_CS"/>
</dbReference>
<dbReference type="InterPro" id="IPR002302">
    <property type="entry name" value="Leu-tRNA-ligase"/>
</dbReference>
<dbReference type="InterPro" id="IPR025709">
    <property type="entry name" value="Leu_tRNA-synth_edit"/>
</dbReference>
<dbReference type="InterPro" id="IPR013155">
    <property type="entry name" value="M/V/L/I-tRNA-synth_anticd-bd"/>
</dbReference>
<dbReference type="InterPro" id="IPR015413">
    <property type="entry name" value="Methionyl/Leucyl_tRNA_Synth"/>
</dbReference>
<dbReference type="InterPro" id="IPR014729">
    <property type="entry name" value="Rossmann-like_a/b/a_fold"/>
</dbReference>
<dbReference type="InterPro" id="IPR009080">
    <property type="entry name" value="tRNAsynth_Ia_anticodon-bd"/>
</dbReference>
<dbReference type="InterPro" id="IPR009008">
    <property type="entry name" value="Val/Leu/Ile-tRNA-synth_edit"/>
</dbReference>
<dbReference type="NCBIfam" id="TIGR00396">
    <property type="entry name" value="leuS_bact"/>
    <property type="match status" value="1"/>
</dbReference>
<dbReference type="PANTHER" id="PTHR43740:SF2">
    <property type="entry name" value="LEUCINE--TRNA LIGASE, MITOCHONDRIAL"/>
    <property type="match status" value="1"/>
</dbReference>
<dbReference type="PANTHER" id="PTHR43740">
    <property type="entry name" value="LEUCYL-TRNA SYNTHETASE"/>
    <property type="match status" value="1"/>
</dbReference>
<dbReference type="Pfam" id="PF08264">
    <property type="entry name" value="Anticodon_1"/>
    <property type="match status" value="1"/>
</dbReference>
<dbReference type="Pfam" id="PF13603">
    <property type="entry name" value="tRNA-synt_1_2"/>
    <property type="match status" value="1"/>
</dbReference>
<dbReference type="Pfam" id="PF09334">
    <property type="entry name" value="tRNA-synt_1g"/>
    <property type="match status" value="1"/>
</dbReference>
<dbReference type="PRINTS" id="PR00985">
    <property type="entry name" value="TRNASYNTHLEU"/>
</dbReference>
<dbReference type="SUPFAM" id="SSF47323">
    <property type="entry name" value="Anticodon-binding domain of a subclass of class I aminoacyl-tRNA synthetases"/>
    <property type="match status" value="1"/>
</dbReference>
<dbReference type="SUPFAM" id="SSF52374">
    <property type="entry name" value="Nucleotidylyl transferase"/>
    <property type="match status" value="1"/>
</dbReference>
<dbReference type="SUPFAM" id="SSF50677">
    <property type="entry name" value="ValRS/IleRS/LeuRS editing domain"/>
    <property type="match status" value="1"/>
</dbReference>
<dbReference type="PROSITE" id="PS00178">
    <property type="entry name" value="AA_TRNA_LIGASE_I"/>
    <property type="match status" value="1"/>
</dbReference>
<name>SYL_CHLMU</name>
<accession>Q9PKI4</accession>
<proteinExistence type="inferred from homology"/>
<protein>
    <recommendedName>
        <fullName evidence="1">Leucine--tRNA ligase</fullName>
        <ecNumber evidence="1">6.1.1.4</ecNumber>
    </recommendedName>
    <alternativeName>
        <fullName evidence="1">Leucyl-tRNA synthetase</fullName>
        <shortName evidence="1">LeuRS</shortName>
    </alternativeName>
</protein>
<organism>
    <name type="scientific">Chlamydia muridarum (strain MoPn / Nigg)</name>
    <dbReference type="NCBI Taxonomy" id="243161"/>
    <lineage>
        <taxon>Bacteria</taxon>
        <taxon>Pseudomonadati</taxon>
        <taxon>Chlamydiota</taxon>
        <taxon>Chlamydiia</taxon>
        <taxon>Chlamydiales</taxon>
        <taxon>Chlamydiaceae</taxon>
        <taxon>Chlamydia/Chlamydophila group</taxon>
        <taxon>Chlamydia</taxon>
    </lineage>
</organism>
<evidence type="ECO:0000255" key="1">
    <source>
        <dbReference type="HAMAP-Rule" id="MF_00049"/>
    </source>
</evidence>